<comment type="subcellular location">
    <subcellularLocation>
        <location evidence="1">Cytoplasm</location>
    </subcellularLocation>
    <subcellularLocation>
        <location evidence="1">Nucleus</location>
    </subcellularLocation>
</comment>
<comment type="miscellaneous">
    <text evidence="2">Present with 3140 molecules/cell in log phase SD medium.</text>
</comment>
<organism>
    <name type="scientific">Saccharomyces cerevisiae (strain ATCC 204508 / S288c)</name>
    <name type="common">Baker's yeast</name>
    <dbReference type="NCBI Taxonomy" id="559292"/>
    <lineage>
        <taxon>Eukaryota</taxon>
        <taxon>Fungi</taxon>
        <taxon>Dikarya</taxon>
        <taxon>Ascomycota</taxon>
        <taxon>Saccharomycotina</taxon>
        <taxon>Saccharomycetes</taxon>
        <taxon>Saccharomycetales</taxon>
        <taxon>Saccharomycetaceae</taxon>
        <taxon>Saccharomyces</taxon>
    </lineage>
</organism>
<keyword id="KW-0963">Cytoplasm</keyword>
<keyword id="KW-0539">Nucleus</keyword>
<keyword id="KW-1185">Reference proteome</keyword>
<gene>
    <name type="ordered locus">YNL162W-A</name>
</gene>
<dbReference type="EMBL" id="Z71438">
    <property type="status" value="NOT_ANNOTATED_CDS"/>
    <property type="molecule type" value="Genomic_DNA"/>
</dbReference>
<dbReference type="EMBL" id="BK006947">
    <property type="protein sequence ID" value="DAA10386.1"/>
    <property type="molecule type" value="Genomic_DNA"/>
</dbReference>
<dbReference type="RefSeq" id="NP_076906.1">
    <property type="nucleotide sequence ID" value="NM_001184490.1"/>
</dbReference>
<dbReference type="BioGRID" id="35666">
    <property type="interactions" value="18"/>
</dbReference>
<dbReference type="FunCoup" id="Q3E7A8">
    <property type="interactions" value="38"/>
</dbReference>
<dbReference type="STRING" id="4932.YNL162W-A"/>
<dbReference type="PaxDb" id="4932-YNL162W-A"/>
<dbReference type="PeptideAtlas" id="Q3E7A8"/>
<dbReference type="EnsemblFungi" id="YNL162W-A_mRNA">
    <property type="protein sequence ID" value="YNL162W-A"/>
    <property type="gene ID" value="YNL162W-A"/>
</dbReference>
<dbReference type="GeneID" id="855559"/>
<dbReference type="KEGG" id="sce:YNL162W-A"/>
<dbReference type="AGR" id="SGD:S000007624"/>
<dbReference type="SGD" id="S000007624">
    <property type="gene designation" value="YNL162W-A"/>
</dbReference>
<dbReference type="VEuPathDB" id="FungiDB:YNL162W-A"/>
<dbReference type="eggNOG" id="ENOG502S9PK">
    <property type="taxonomic scope" value="Eukaryota"/>
</dbReference>
<dbReference type="HOGENOM" id="CLU_192397_1_0_1"/>
<dbReference type="InParanoid" id="Q3E7A8"/>
<dbReference type="OMA" id="CLIQQNY"/>
<dbReference type="OrthoDB" id="4039633at2759"/>
<dbReference type="BioCyc" id="YEAST:G3O-33407-MONOMER"/>
<dbReference type="BioGRID-ORCS" id="855559">
    <property type="hits" value="0 hits in 10 CRISPR screens"/>
</dbReference>
<dbReference type="PRO" id="PR:Q3E7A8"/>
<dbReference type="Proteomes" id="UP000002311">
    <property type="component" value="Chromosome XIV"/>
</dbReference>
<dbReference type="RNAct" id="Q3E7A8">
    <property type="molecule type" value="protein"/>
</dbReference>
<dbReference type="GO" id="GO:0005737">
    <property type="term" value="C:cytoplasm"/>
    <property type="evidence" value="ECO:0007005"/>
    <property type="project" value="SGD"/>
</dbReference>
<dbReference type="GO" id="GO:0005634">
    <property type="term" value="C:nucleus"/>
    <property type="evidence" value="ECO:0007005"/>
    <property type="project" value="SGD"/>
</dbReference>
<protein>
    <recommendedName>
        <fullName>Uncharacterized protein YNL162W-A</fullName>
    </recommendedName>
</protein>
<accession>Q3E7A8</accession>
<accession>D6W120</accession>
<sequence>MSDKPDSQVFCPNCNERLQKCLVQQNYAIIICPSLVCGYPFNQREVLENLTYVDDNDVLKVAKKRLSSRSKP</sequence>
<evidence type="ECO:0000269" key="1">
    <source>
    </source>
</evidence>
<evidence type="ECO:0000269" key="2">
    <source>
    </source>
</evidence>
<reference key="1">
    <citation type="journal article" date="1997" name="Nature">
        <title>The nucleotide sequence of Saccharomyces cerevisiae chromosome XIV and its evolutionary implications.</title>
        <authorList>
            <person name="Philippsen P."/>
            <person name="Kleine K."/>
            <person name="Poehlmann R."/>
            <person name="Duesterhoeft A."/>
            <person name="Hamberg K."/>
            <person name="Hegemann J.H."/>
            <person name="Obermaier B."/>
            <person name="Urrestarazu L.A."/>
            <person name="Aert R."/>
            <person name="Albermann K."/>
            <person name="Altmann R."/>
            <person name="Andre B."/>
            <person name="Baladron V."/>
            <person name="Ballesta J.P.G."/>
            <person name="Becam A.-M."/>
            <person name="Beinhauer J.D."/>
            <person name="Boskovic J."/>
            <person name="Buitrago M.J."/>
            <person name="Bussereau F."/>
            <person name="Coster F."/>
            <person name="Crouzet M."/>
            <person name="D'Angelo M."/>
            <person name="Dal Pero F."/>
            <person name="De Antoni A."/>
            <person name="del Rey F."/>
            <person name="Doignon F."/>
            <person name="Domdey H."/>
            <person name="Dubois E."/>
            <person name="Fiedler T.A."/>
            <person name="Fleig U."/>
            <person name="Floeth M."/>
            <person name="Fritz C."/>
            <person name="Gaillardin C."/>
            <person name="Garcia-Cantalejo J.M."/>
            <person name="Glansdorff N."/>
            <person name="Goffeau A."/>
            <person name="Gueldener U."/>
            <person name="Herbert C.J."/>
            <person name="Heumann K."/>
            <person name="Heuss-Neitzel D."/>
            <person name="Hilbert H."/>
            <person name="Hinni K."/>
            <person name="Iraqui Houssaini I."/>
            <person name="Jacquet M."/>
            <person name="Jimenez A."/>
            <person name="Jonniaux J.-L."/>
            <person name="Karpfinger-Hartl L."/>
            <person name="Lanfranchi G."/>
            <person name="Lepingle A."/>
            <person name="Levesque H."/>
            <person name="Lyck R."/>
            <person name="Maftahi M."/>
            <person name="Mallet L."/>
            <person name="Maurer C.T.C."/>
            <person name="Messenguy F."/>
            <person name="Mewes H.-W."/>
            <person name="Moestl D."/>
            <person name="Nasr F."/>
            <person name="Nicaud J.-M."/>
            <person name="Niedenthal R.K."/>
            <person name="Pandolfo D."/>
            <person name="Pierard A."/>
            <person name="Piravandi E."/>
            <person name="Planta R.J."/>
            <person name="Pohl T.M."/>
            <person name="Purnelle B."/>
            <person name="Rebischung C."/>
            <person name="Remacha M.A."/>
            <person name="Revuelta J.L."/>
            <person name="Rinke M."/>
            <person name="Saiz J.E."/>
            <person name="Sartorello F."/>
            <person name="Scherens B."/>
            <person name="Sen-Gupta M."/>
            <person name="Soler-Mira A."/>
            <person name="Urbanus J.H.M."/>
            <person name="Valle G."/>
            <person name="Van Dyck L."/>
            <person name="Verhasselt P."/>
            <person name="Vierendeels F."/>
            <person name="Vissers S."/>
            <person name="Voet M."/>
            <person name="Volckaert G."/>
            <person name="Wach A."/>
            <person name="Wambutt R."/>
            <person name="Wedler H."/>
            <person name="Zollner A."/>
            <person name="Hani J."/>
        </authorList>
    </citation>
    <scope>NUCLEOTIDE SEQUENCE [LARGE SCALE GENOMIC DNA]</scope>
    <source>
        <strain>ATCC 204508 / S288c</strain>
    </source>
</reference>
<reference key="2">
    <citation type="journal article" date="2014" name="G3 (Bethesda)">
        <title>The reference genome sequence of Saccharomyces cerevisiae: Then and now.</title>
        <authorList>
            <person name="Engel S.R."/>
            <person name="Dietrich F.S."/>
            <person name="Fisk D.G."/>
            <person name="Binkley G."/>
            <person name="Balakrishnan R."/>
            <person name="Costanzo M.C."/>
            <person name="Dwight S.S."/>
            <person name="Hitz B.C."/>
            <person name="Karra K."/>
            <person name="Nash R.S."/>
            <person name="Weng S."/>
            <person name="Wong E.D."/>
            <person name="Lloyd P."/>
            <person name="Skrzypek M.S."/>
            <person name="Miyasato S.R."/>
            <person name="Simison M."/>
            <person name="Cherry J.M."/>
        </authorList>
    </citation>
    <scope>GENOME REANNOTATION</scope>
    <source>
        <strain>ATCC 204508 / S288c</strain>
    </source>
</reference>
<reference key="3">
    <citation type="journal article" date="2000" name="FEBS Lett.">
        <title>Genomic exploration of the hemiascomycetous yeasts: 4. The genome of Saccharomyces cerevisiae revisited.</title>
        <authorList>
            <person name="Blandin G."/>
            <person name="Durrens P."/>
            <person name="Tekaia F."/>
            <person name="Aigle M."/>
            <person name="Bolotin-Fukuhara M."/>
            <person name="Bon E."/>
            <person name="Casaregola S."/>
            <person name="de Montigny J."/>
            <person name="Gaillardin C."/>
            <person name="Lepingle A."/>
            <person name="Llorente B."/>
            <person name="Malpertuy A."/>
            <person name="Neuveglise C."/>
            <person name="Ozier-Kalogeropoulos O."/>
            <person name="Perrin A."/>
            <person name="Potier S."/>
            <person name="Souciet J.-L."/>
            <person name="Talla E."/>
            <person name="Toffano-Nioche C."/>
            <person name="Wesolowski-Louvel M."/>
            <person name="Marck C."/>
            <person name="Dujon B."/>
        </authorList>
    </citation>
    <scope>GENOME REANNOTATION</scope>
</reference>
<reference key="4">
    <citation type="journal article" date="2003" name="Nature">
        <title>Global analysis of protein localization in budding yeast.</title>
        <authorList>
            <person name="Huh W.-K."/>
            <person name="Falvo J.V."/>
            <person name="Gerke L.C."/>
            <person name="Carroll A.S."/>
            <person name="Howson R.W."/>
            <person name="Weissman J.S."/>
            <person name="O'Shea E.K."/>
        </authorList>
    </citation>
    <scope>SUBCELLULAR LOCATION [LARGE SCALE ANALYSIS]</scope>
</reference>
<reference key="5">
    <citation type="journal article" date="2003" name="Nature">
        <title>Global analysis of protein expression in yeast.</title>
        <authorList>
            <person name="Ghaemmaghami S."/>
            <person name="Huh W.-K."/>
            <person name="Bower K."/>
            <person name="Howson R.W."/>
            <person name="Belle A."/>
            <person name="Dephoure N."/>
            <person name="O'Shea E.K."/>
            <person name="Weissman J.S."/>
        </authorList>
    </citation>
    <scope>LEVEL OF PROTEIN EXPRESSION [LARGE SCALE ANALYSIS]</scope>
</reference>
<proteinExistence type="evidence at protein level"/>
<name>YN162_YEAST</name>
<feature type="chain" id="PRO_0000247798" description="Uncharacterized protein YNL162W-A">
    <location>
        <begin position="1"/>
        <end position="72"/>
    </location>
</feature>